<keyword id="KW-0028">Amino-acid biosynthesis</keyword>
<keyword id="KW-0057">Aromatic amino acid biosynthesis</keyword>
<keyword id="KW-0210">Decarboxylase</keyword>
<keyword id="KW-0456">Lyase</keyword>
<keyword id="KW-1185">Reference proteome</keyword>
<keyword id="KW-0822">Tryptophan biosynthesis</keyword>
<evidence type="ECO:0000255" key="1">
    <source>
        <dbReference type="HAMAP-Rule" id="MF_00134"/>
    </source>
</evidence>
<protein>
    <recommendedName>
        <fullName evidence="1">Indole-3-glycerol phosphate synthase</fullName>
        <shortName evidence="1">IGPS</shortName>
        <ecNumber evidence="1">4.1.1.48</ecNumber>
    </recommendedName>
</protein>
<gene>
    <name evidence="1" type="primary">trpC</name>
    <name type="ordered locus">BCAN_A1160</name>
</gene>
<proteinExistence type="inferred from homology"/>
<organism>
    <name type="scientific">Brucella canis (strain ATCC 23365 / NCTC 10854 / RM-666)</name>
    <dbReference type="NCBI Taxonomy" id="483179"/>
    <lineage>
        <taxon>Bacteria</taxon>
        <taxon>Pseudomonadati</taxon>
        <taxon>Pseudomonadota</taxon>
        <taxon>Alphaproteobacteria</taxon>
        <taxon>Hyphomicrobiales</taxon>
        <taxon>Brucellaceae</taxon>
        <taxon>Brucella/Ochrobactrum group</taxon>
        <taxon>Brucella</taxon>
    </lineage>
</organism>
<feature type="chain" id="PRO_1000076414" description="Indole-3-glycerol phosphate synthase">
    <location>
        <begin position="1"/>
        <end position="268"/>
    </location>
</feature>
<dbReference type="EC" id="4.1.1.48" evidence="1"/>
<dbReference type="EMBL" id="CP000872">
    <property type="protein sequence ID" value="ABX62209.1"/>
    <property type="molecule type" value="Genomic_DNA"/>
</dbReference>
<dbReference type="RefSeq" id="WP_002964269.1">
    <property type="nucleotide sequence ID" value="NC_010103.1"/>
</dbReference>
<dbReference type="SMR" id="A9M5F4"/>
<dbReference type="GeneID" id="93016523"/>
<dbReference type="KEGG" id="bcs:BCAN_A1160"/>
<dbReference type="HOGENOM" id="CLU_034247_2_0_5"/>
<dbReference type="PhylomeDB" id="A9M5F4"/>
<dbReference type="UniPathway" id="UPA00035">
    <property type="reaction ID" value="UER00043"/>
</dbReference>
<dbReference type="Proteomes" id="UP000001385">
    <property type="component" value="Chromosome I"/>
</dbReference>
<dbReference type="GO" id="GO:0004425">
    <property type="term" value="F:indole-3-glycerol-phosphate synthase activity"/>
    <property type="evidence" value="ECO:0007669"/>
    <property type="project" value="UniProtKB-UniRule"/>
</dbReference>
<dbReference type="GO" id="GO:0004640">
    <property type="term" value="F:phosphoribosylanthranilate isomerase activity"/>
    <property type="evidence" value="ECO:0007669"/>
    <property type="project" value="TreeGrafter"/>
</dbReference>
<dbReference type="GO" id="GO:0000162">
    <property type="term" value="P:L-tryptophan biosynthetic process"/>
    <property type="evidence" value="ECO:0007669"/>
    <property type="project" value="UniProtKB-UniRule"/>
</dbReference>
<dbReference type="CDD" id="cd00331">
    <property type="entry name" value="IGPS"/>
    <property type="match status" value="1"/>
</dbReference>
<dbReference type="FunFam" id="3.20.20.70:FF:000024">
    <property type="entry name" value="Indole-3-glycerol phosphate synthase"/>
    <property type="match status" value="1"/>
</dbReference>
<dbReference type="Gene3D" id="3.20.20.70">
    <property type="entry name" value="Aldolase class I"/>
    <property type="match status" value="1"/>
</dbReference>
<dbReference type="HAMAP" id="MF_00134_B">
    <property type="entry name" value="IGPS_B"/>
    <property type="match status" value="1"/>
</dbReference>
<dbReference type="InterPro" id="IPR013785">
    <property type="entry name" value="Aldolase_TIM"/>
</dbReference>
<dbReference type="InterPro" id="IPR045186">
    <property type="entry name" value="Indole-3-glycerol_P_synth"/>
</dbReference>
<dbReference type="InterPro" id="IPR013798">
    <property type="entry name" value="Indole-3-glycerol_P_synth_dom"/>
</dbReference>
<dbReference type="InterPro" id="IPR001468">
    <property type="entry name" value="Indole-3-GlycerolPSynthase_CS"/>
</dbReference>
<dbReference type="InterPro" id="IPR011060">
    <property type="entry name" value="RibuloseP-bd_barrel"/>
</dbReference>
<dbReference type="NCBIfam" id="NF001370">
    <property type="entry name" value="PRK00278.1-2"/>
    <property type="match status" value="1"/>
</dbReference>
<dbReference type="NCBIfam" id="NF001373">
    <property type="entry name" value="PRK00278.1-6"/>
    <property type="match status" value="1"/>
</dbReference>
<dbReference type="NCBIfam" id="NF001377">
    <property type="entry name" value="PRK00278.2-4"/>
    <property type="match status" value="1"/>
</dbReference>
<dbReference type="PANTHER" id="PTHR22854:SF2">
    <property type="entry name" value="INDOLE-3-GLYCEROL-PHOSPHATE SYNTHASE"/>
    <property type="match status" value="1"/>
</dbReference>
<dbReference type="PANTHER" id="PTHR22854">
    <property type="entry name" value="TRYPTOPHAN BIOSYNTHESIS PROTEIN"/>
    <property type="match status" value="1"/>
</dbReference>
<dbReference type="Pfam" id="PF00218">
    <property type="entry name" value="IGPS"/>
    <property type="match status" value="1"/>
</dbReference>
<dbReference type="SUPFAM" id="SSF51366">
    <property type="entry name" value="Ribulose-phoshate binding barrel"/>
    <property type="match status" value="1"/>
</dbReference>
<dbReference type="PROSITE" id="PS00614">
    <property type="entry name" value="IGPS"/>
    <property type="match status" value="1"/>
</dbReference>
<reference key="1">
    <citation type="submission" date="2007-10" db="EMBL/GenBank/DDBJ databases">
        <title>Brucella canis ATCC 23365 whole genome shotgun sequencing project.</title>
        <authorList>
            <person name="Setubal J.C."/>
            <person name="Bowns C."/>
            <person name="Boyle S."/>
            <person name="Crasta O.R."/>
            <person name="Czar M.J."/>
            <person name="Dharmanolla C."/>
            <person name="Gillespie J.J."/>
            <person name="Kenyon R.W."/>
            <person name="Lu J."/>
            <person name="Mane S."/>
            <person name="Mohapatra S."/>
            <person name="Nagrani S."/>
            <person name="Purkayastha A."/>
            <person name="Rajasimha H.K."/>
            <person name="Shallom J.M."/>
            <person name="Shallom S."/>
            <person name="Shukla M."/>
            <person name="Snyder E.E."/>
            <person name="Sobral B.W."/>
            <person name="Wattam A.R."/>
            <person name="Will R."/>
            <person name="Williams K."/>
            <person name="Yoo H."/>
            <person name="Bruce D."/>
            <person name="Detter C."/>
            <person name="Munk C."/>
            <person name="Brettin T.S."/>
        </authorList>
    </citation>
    <scope>NUCLEOTIDE SEQUENCE [LARGE SCALE GENOMIC DNA]</scope>
    <source>
        <strain>ATCC 23365 / NCTC 10854 / RM-666</strain>
    </source>
</reference>
<comment type="catalytic activity">
    <reaction evidence="1">
        <text>1-(2-carboxyphenylamino)-1-deoxy-D-ribulose 5-phosphate + H(+) = (1S,2R)-1-C-(indol-3-yl)glycerol 3-phosphate + CO2 + H2O</text>
        <dbReference type="Rhea" id="RHEA:23476"/>
        <dbReference type="ChEBI" id="CHEBI:15377"/>
        <dbReference type="ChEBI" id="CHEBI:15378"/>
        <dbReference type="ChEBI" id="CHEBI:16526"/>
        <dbReference type="ChEBI" id="CHEBI:58613"/>
        <dbReference type="ChEBI" id="CHEBI:58866"/>
        <dbReference type="EC" id="4.1.1.48"/>
    </reaction>
</comment>
<comment type="pathway">
    <text evidence="1">Amino-acid biosynthesis; L-tryptophan biosynthesis; L-tryptophan from chorismate: step 4/5.</text>
</comment>
<comment type="similarity">
    <text evidence="1">Belongs to the TrpC family.</text>
</comment>
<accession>A9M5F4</accession>
<sequence length="268" mass="29269">MSTDILRKIEAYKREEIAAAKARLALDELKARTRDQSAPRGFLKALEAKRAAGQFALIAEIKKASPSKGLIRPDFDPPALAKAYEEGGAACLSVLTDTPSFQGAPEFLTAARQACSLPALRKDFLFDPYQVYEARSWGADCILIIMASVDDDLAKELEDTAFALGMDALIEVHDEAEMERALKLSSRLLGVNNRNLRSFEVNLAVSERLAKMAPSDRLLVGESGIFTHEDCLRLEKSGIGTFLIGESLMRQHDVAAATRALLTGAEKL</sequence>
<name>TRPC_BRUC2</name>